<keyword id="KW-1185">Reference proteome</keyword>
<proteinExistence type="predicted"/>
<sequence length="85" mass="9552">MLSQNGTADPRYISYPGCIDCGPTFHLETDTATTRNGTSSFGDRIRSFCERARSLISNFVTWRSRNESCEVLAEIPQEKEVESTL</sequence>
<protein>
    <recommendedName>
        <fullName>Uncharacterized gene 6a protein</fullName>
    </recommendedName>
</protein>
<feature type="chain" id="PRO_0000406552" description="Uncharacterized gene 6a protein">
    <location>
        <begin position="1"/>
        <end position="85"/>
    </location>
</feature>
<reference key="1">
    <citation type="journal article" date="2000" name="J. Virol.">
        <title>The genome of a very virulent Marek's disease virus.</title>
        <authorList>
            <person name="Tulman E.R."/>
            <person name="Afonso C.L."/>
            <person name="Lu Z."/>
            <person name="Zsak L."/>
            <person name="Rock D.L."/>
            <person name="Kutish G.F."/>
        </authorList>
    </citation>
    <scope>NUCLEOTIDE SEQUENCE [LARGE SCALE GENOMIC DNA]</scope>
</reference>
<gene>
    <name type="primary">MDV006</name>
    <name type="synonym">MDV075</name>
</gene>
<organism>
    <name type="scientific">Gallid herpesvirus 2 (strain Chicken/Md5/ATCC VR-987)</name>
    <name type="common">GaHV-2</name>
    <name type="synonym">Marek's disease herpesvirus type 1</name>
    <dbReference type="NCBI Taxonomy" id="10389"/>
    <lineage>
        <taxon>Viruses</taxon>
        <taxon>Duplodnaviria</taxon>
        <taxon>Heunggongvirae</taxon>
        <taxon>Peploviricota</taxon>
        <taxon>Herviviricetes</taxon>
        <taxon>Herpesvirales</taxon>
        <taxon>Orthoherpesviridae</taxon>
        <taxon>Alphaherpesvirinae</taxon>
        <taxon>Mardivirus</taxon>
        <taxon>Mardivirus gallidalpha2</taxon>
        <taxon>Gallid alphaherpesvirus 2</taxon>
    </lineage>
</organism>
<organismHost>
    <name type="scientific">Gallus gallus</name>
    <name type="common">Chicken</name>
    <dbReference type="NCBI Taxonomy" id="9031"/>
</organismHost>
<dbReference type="EMBL" id="AF243438">
    <property type="protein sequence ID" value="AAG14287.1"/>
    <property type="molecule type" value="Genomic_DNA"/>
</dbReference>
<dbReference type="EMBL" id="AF243438">
    <property type="protein sequence ID" value="AAG14288.1"/>
    <property type="molecule type" value="Genomic_DNA"/>
</dbReference>
<dbReference type="Proteomes" id="UP000008072">
    <property type="component" value="Segment"/>
</dbReference>
<accession>Q9DGV6</accession>
<name>VG06A_GAHVM</name>